<proteinExistence type="inferred from homology"/>
<organism>
    <name type="scientific">Yersinia pestis</name>
    <dbReference type="NCBI Taxonomy" id="632"/>
    <lineage>
        <taxon>Bacteria</taxon>
        <taxon>Pseudomonadati</taxon>
        <taxon>Pseudomonadota</taxon>
        <taxon>Gammaproteobacteria</taxon>
        <taxon>Enterobacterales</taxon>
        <taxon>Yersiniaceae</taxon>
        <taxon>Yersinia</taxon>
    </lineage>
</organism>
<accession>Q8ZFV8</accession>
<accession>Q0WGK6</accession>
<accession>Q74V74</accession>
<accession>Q7CHT1</accession>
<sequence>MIISASTDYRAAAQRKLPPFLFHYIDGGAYNEQTLRRNTADLADIALRQRVLKNMSELSLETQLFGETQAMPVVLGPVGLSGMYARRGEVQAARAADKKGIPFTLSTLSVCPIEEVAPAIARPMWFQLYVLKDRGFMRNALTRAQAAGVKTLVFTVDMPVPGARYRDAHSGMSGPNAAARRLLQAIAHPQWAWDVGLNGKPHDLGNISAYLGKPTTLEDYMGWIATNFDPSISWKDLEWVREFWQGPMIIKGILDPEDAKDAVKFGADGIVVSNHGGRQLDGVLSTARALPAIADAVKGDITILADSGIRTGLDVVRMIALGADSVLLGRAFVYALATAGEAGVINLLTLIEQEMRVAMTLTGAKRIADINRDSLAVSERG</sequence>
<gene>
    <name evidence="1" type="primary">lldD</name>
    <name type="ordered locus">YPO1569</name>
    <name type="ordered locus">y2596</name>
    <name type="ordered locus">YP_1457</name>
</gene>
<comment type="function">
    <text evidence="1">Catalyzes the conversion of L-lactate to pyruvate. Is coupled to the respiratory chain.</text>
</comment>
<comment type="catalytic activity">
    <reaction evidence="1">
        <text>(S)-lactate + A = pyruvate + AH2</text>
        <dbReference type="Rhea" id="RHEA:45816"/>
        <dbReference type="ChEBI" id="CHEBI:13193"/>
        <dbReference type="ChEBI" id="CHEBI:15361"/>
        <dbReference type="ChEBI" id="CHEBI:16651"/>
        <dbReference type="ChEBI" id="CHEBI:17499"/>
    </reaction>
</comment>
<comment type="cofactor">
    <cofactor evidence="1">
        <name>FMN</name>
        <dbReference type="ChEBI" id="CHEBI:58210"/>
    </cofactor>
</comment>
<comment type="subcellular location">
    <subcellularLocation>
        <location evidence="1">Cell inner membrane</location>
        <topology evidence="1">Peripheral membrane protein</topology>
    </subcellularLocation>
</comment>
<comment type="similarity">
    <text evidence="1">Belongs to the FMN-dependent alpha-hydroxy acid dehydrogenase family.</text>
</comment>
<dbReference type="EC" id="1.1.-.-" evidence="1"/>
<dbReference type="EMBL" id="AL590842">
    <property type="protein sequence ID" value="CAL20214.1"/>
    <property type="molecule type" value="Genomic_DNA"/>
</dbReference>
<dbReference type="EMBL" id="AE009952">
    <property type="protein sequence ID" value="AAM86151.1"/>
    <property type="molecule type" value="Genomic_DNA"/>
</dbReference>
<dbReference type="EMBL" id="AE017042">
    <property type="protein sequence ID" value="AAS61696.1"/>
    <property type="molecule type" value="Genomic_DNA"/>
</dbReference>
<dbReference type="PIR" id="AD0191">
    <property type="entry name" value="AD0191"/>
</dbReference>
<dbReference type="RefSeq" id="WP_002211919.1">
    <property type="nucleotide sequence ID" value="NZ_WUCM01000068.1"/>
</dbReference>
<dbReference type="RefSeq" id="YP_002346582.1">
    <property type="nucleotide sequence ID" value="NC_003143.1"/>
</dbReference>
<dbReference type="SMR" id="Q8ZFV8"/>
<dbReference type="STRING" id="214092.YPO1569"/>
<dbReference type="PaxDb" id="214092-YPO1569"/>
<dbReference type="DNASU" id="1147543"/>
<dbReference type="EnsemblBacteria" id="AAS61696">
    <property type="protein sequence ID" value="AAS61696"/>
    <property type="gene ID" value="YP_1457"/>
</dbReference>
<dbReference type="GeneID" id="57977002"/>
<dbReference type="KEGG" id="ype:YPO1569"/>
<dbReference type="KEGG" id="ypk:y2596"/>
<dbReference type="KEGG" id="ypm:YP_1457"/>
<dbReference type="PATRIC" id="fig|214092.21.peg.1910"/>
<dbReference type="eggNOG" id="COG1304">
    <property type="taxonomic scope" value="Bacteria"/>
</dbReference>
<dbReference type="HOGENOM" id="CLU_020639_0_0_6"/>
<dbReference type="OMA" id="RIWFRPK"/>
<dbReference type="OrthoDB" id="9770452at2"/>
<dbReference type="Proteomes" id="UP000000815">
    <property type="component" value="Chromosome"/>
</dbReference>
<dbReference type="Proteomes" id="UP000001019">
    <property type="component" value="Chromosome"/>
</dbReference>
<dbReference type="Proteomes" id="UP000002490">
    <property type="component" value="Chromosome"/>
</dbReference>
<dbReference type="GO" id="GO:0005886">
    <property type="term" value="C:plasma membrane"/>
    <property type="evidence" value="ECO:0000318"/>
    <property type="project" value="GO_Central"/>
</dbReference>
<dbReference type="GO" id="GO:0010181">
    <property type="term" value="F:FMN binding"/>
    <property type="evidence" value="ECO:0007669"/>
    <property type="project" value="InterPro"/>
</dbReference>
<dbReference type="GO" id="GO:0004459">
    <property type="term" value="F:L-lactate dehydrogenase activity"/>
    <property type="evidence" value="ECO:0000318"/>
    <property type="project" value="GO_Central"/>
</dbReference>
<dbReference type="GO" id="GO:0009060">
    <property type="term" value="P:aerobic respiration"/>
    <property type="evidence" value="ECO:0000318"/>
    <property type="project" value="GO_Central"/>
</dbReference>
<dbReference type="GO" id="GO:0006089">
    <property type="term" value="P:lactate metabolic process"/>
    <property type="evidence" value="ECO:0007669"/>
    <property type="project" value="UniProtKB-UniRule"/>
</dbReference>
<dbReference type="CDD" id="cd02809">
    <property type="entry name" value="alpha_hydroxyacid_oxid_FMN"/>
    <property type="match status" value="1"/>
</dbReference>
<dbReference type="FunFam" id="3.20.20.70:FF:000029">
    <property type="entry name" value="L-lactate dehydrogenase"/>
    <property type="match status" value="1"/>
</dbReference>
<dbReference type="Gene3D" id="3.20.20.70">
    <property type="entry name" value="Aldolase class I"/>
    <property type="match status" value="1"/>
</dbReference>
<dbReference type="HAMAP" id="MF_01559">
    <property type="entry name" value="L_lact_dehydr"/>
    <property type="match status" value="1"/>
</dbReference>
<dbReference type="InterPro" id="IPR013785">
    <property type="entry name" value="Aldolase_TIM"/>
</dbReference>
<dbReference type="InterPro" id="IPR012133">
    <property type="entry name" value="Alpha-hydoxy_acid_DH_FMN"/>
</dbReference>
<dbReference type="InterPro" id="IPR000262">
    <property type="entry name" value="FMN-dep_DH"/>
</dbReference>
<dbReference type="InterPro" id="IPR037396">
    <property type="entry name" value="FMN_HAD"/>
</dbReference>
<dbReference type="InterPro" id="IPR008259">
    <property type="entry name" value="FMN_hydac_DH_AS"/>
</dbReference>
<dbReference type="InterPro" id="IPR020920">
    <property type="entry name" value="LldD"/>
</dbReference>
<dbReference type="NCBIfam" id="NF033901">
    <property type="entry name" value="L_lactate_LldD"/>
    <property type="match status" value="1"/>
</dbReference>
<dbReference type="NCBIfam" id="NF008398">
    <property type="entry name" value="PRK11197.1"/>
    <property type="match status" value="1"/>
</dbReference>
<dbReference type="PANTHER" id="PTHR10578:SF85">
    <property type="entry name" value="L-LACTATE DEHYDROGENASE"/>
    <property type="match status" value="1"/>
</dbReference>
<dbReference type="PANTHER" id="PTHR10578">
    <property type="entry name" value="S -2-HYDROXY-ACID OXIDASE-RELATED"/>
    <property type="match status" value="1"/>
</dbReference>
<dbReference type="Pfam" id="PF01070">
    <property type="entry name" value="FMN_dh"/>
    <property type="match status" value="1"/>
</dbReference>
<dbReference type="PIRSF" id="PIRSF000138">
    <property type="entry name" value="Al-hdrx_acd_dh"/>
    <property type="match status" value="1"/>
</dbReference>
<dbReference type="SUPFAM" id="SSF51395">
    <property type="entry name" value="FMN-linked oxidoreductases"/>
    <property type="match status" value="1"/>
</dbReference>
<dbReference type="PROSITE" id="PS00557">
    <property type="entry name" value="FMN_HYDROXY_ACID_DH_1"/>
    <property type="match status" value="1"/>
</dbReference>
<dbReference type="PROSITE" id="PS51349">
    <property type="entry name" value="FMN_HYDROXY_ACID_DH_2"/>
    <property type="match status" value="1"/>
</dbReference>
<reference key="1">
    <citation type="journal article" date="2001" name="Nature">
        <title>Genome sequence of Yersinia pestis, the causative agent of plague.</title>
        <authorList>
            <person name="Parkhill J."/>
            <person name="Wren B.W."/>
            <person name="Thomson N.R."/>
            <person name="Titball R.W."/>
            <person name="Holden M.T.G."/>
            <person name="Prentice M.B."/>
            <person name="Sebaihia M."/>
            <person name="James K.D."/>
            <person name="Churcher C.M."/>
            <person name="Mungall K.L."/>
            <person name="Baker S."/>
            <person name="Basham D."/>
            <person name="Bentley S.D."/>
            <person name="Brooks K."/>
            <person name="Cerdeno-Tarraga A.-M."/>
            <person name="Chillingworth T."/>
            <person name="Cronin A."/>
            <person name="Davies R.M."/>
            <person name="Davis P."/>
            <person name="Dougan G."/>
            <person name="Feltwell T."/>
            <person name="Hamlin N."/>
            <person name="Holroyd S."/>
            <person name="Jagels K."/>
            <person name="Karlyshev A.V."/>
            <person name="Leather S."/>
            <person name="Moule S."/>
            <person name="Oyston P.C.F."/>
            <person name="Quail M.A."/>
            <person name="Rutherford K.M."/>
            <person name="Simmonds M."/>
            <person name="Skelton J."/>
            <person name="Stevens K."/>
            <person name="Whitehead S."/>
            <person name="Barrell B.G."/>
        </authorList>
    </citation>
    <scope>NUCLEOTIDE SEQUENCE [LARGE SCALE GENOMIC DNA]</scope>
    <source>
        <strain>CO-92 / Biovar Orientalis</strain>
    </source>
</reference>
<reference key="2">
    <citation type="journal article" date="2002" name="J. Bacteriol.">
        <title>Genome sequence of Yersinia pestis KIM.</title>
        <authorList>
            <person name="Deng W."/>
            <person name="Burland V."/>
            <person name="Plunkett G. III"/>
            <person name="Boutin A."/>
            <person name="Mayhew G.F."/>
            <person name="Liss P."/>
            <person name="Perna N.T."/>
            <person name="Rose D.J."/>
            <person name="Mau B."/>
            <person name="Zhou S."/>
            <person name="Schwartz D.C."/>
            <person name="Fetherston J.D."/>
            <person name="Lindler L.E."/>
            <person name="Brubaker R.R."/>
            <person name="Plano G.V."/>
            <person name="Straley S.C."/>
            <person name="McDonough K.A."/>
            <person name="Nilles M.L."/>
            <person name="Matson J.S."/>
            <person name="Blattner F.R."/>
            <person name="Perry R.D."/>
        </authorList>
    </citation>
    <scope>NUCLEOTIDE SEQUENCE [LARGE SCALE GENOMIC DNA]</scope>
    <source>
        <strain>KIM10+ / Biovar Mediaevalis</strain>
    </source>
</reference>
<reference key="3">
    <citation type="journal article" date="2004" name="DNA Res.">
        <title>Complete genome sequence of Yersinia pestis strain 91001, an isolate avirulent to humans.</title>
        <authorList>
            <person name="Song Y."/>
            <person name="Tong Z."/>
            <person name="Wang J."/>
            <person name="Wang L."/>
            <person name="Guo Z."/>
            <person name="Han Y."/>
            <person name="Zhang J."/>
            <person name="Pei D."/>
            <person name="Zhou D."/>
            <person name="Qin H."/>
            <person name="Pang X."/>
            <person name="Han Y."/>
            <person name="Zhai J."/>
            <person name="Li M."/>
            <person name="Cui B."/>
            <person name="Qi Z."/>
            <person name="Jin L."/>
            <person name="Dai R."/>
            <person name="Chen F."/>
            <person name="Li S."/>
            <person name="Ye C."/>
            <person name="Du Z."/>
            <person name="Lin W."/>
            <person name="Wang J."/>
            <person name="Yu J."/>
            <person name="Yang H."/>
            <person name="Wang J."/>
            <person name="Huang P."/>
            <person name="Yang R."/>
        </authorList>
    </citation>
    <scope>NUCLEOTIDE SEQUENCE [LARGE SCALE GENOMIC DNA]</scope>
    <source>
        <strain>91001 / Biovar Mediaevalis</strain>
    </source>
</reference>
<name>LLDD_YERPE</name>
<keyword id="KW-0997">Cell inner membrane</keyword>
<keyword id="KW-1003">Cell membrane</keyword>
<keyword id="KW-0285">Flavoprotein</keyword>
<keyword id="KW-0288">FMN</keyword>
<keyword id="KW-0472">Membrane</keyword>
<keyword id="KW-0560">Oxidoreductase</keyword>
<keyword id="KW-1185">Reference proteome</keyword>
<feature type="chain" id="PRO_0000206359" description="L-lactate dehydrogenase">
    <location>
        <begin position="1"/>
        <end position="381"/>
    </location>
</feature>
<feature type="domain" description="FMN hydroxy acid dehydrogenase" evidence="1">
    <location>
        <begin position="1"/>
        <end position="380"/>
    </location>
</feature>
<feature type="active site" description="Proton acceptor" evidence="1">
    <location>
        <position position="275"/>
    </location>
</feature>
<feature type="binding site" evidence="1">
    <location>
        <position position="24"/>
    </location>
    <ligand>
        <name>substrate</name>
    </ligand>
</feature>
<feature type="binding site" evidence="1">
    <location>
        <position position="106"/>
    </location>
    <ligand>
        <name>FMN</name>
        <dbReference type="ChEBI" id="CHEBI:58210"/>
    </ligand>
</feature>
<feature type="binding site" evidence="1">
    <location>
        <position position="127"/>
    </location>
    <ligand>
        <name>FMN</name>
        <dbReference type="ChEBI" id="CHEBI:58210"/>
    </ligand>
</feature>
<feature type="binding site" evidence="1">
    <location>
        <position position="129"/>
    </location>
    <ligand>
        <name>substrate</name>
    </ligand>
</feature>
<feature type="binding site" evidence="1">
    <location>
        <position position="155"/>
    </location>
    <ligand>
        <name>FMN</name>
        <dbReference type="ChEBI" id="CHEBI:58210"/>
    </ligand>
</feature>
<feature type="binding site" evidence="1">
    <location>
        <position position="164"/>
    </location>
    <ligand>
        <name>substrate</name>
    </ligand>
</feature>
<feature type="binding site" evidence="1">
    <location>
        <position position="251"/>
    </location>
    <ligand>
        <name>FMN</name>
        <dbReference type="ChEBI" id="CHEBI:58210"/>
    </ligand>
</feature>
<feature type="binding site" evidence="1">
    <location>
        <position position="278"/>
    </location>
    <ligand>
        <name>substrate</name>
    </ligand>
</feature>
<feature type="binding site" evidence="1">
    <location>
        <begin position="306"/>
        <end position="330"/>
    </location>
    <ligand>
        <name>FMN</name>
        <dbReference type="ChEBI" id="CHEBI:58210"/>
    </ligand>
</feature>
<evidence type="ECO:0000255" key="1">
    <source>
        <dbReference type="HAMAP-Rule" id="MF_01559"/>
    </source>
</evidence>
<protein>
    <recommendedName>
        <fullName evidence="1">L-lactate dehydrogenase</fullName>
        <ecNumber evidence="1">1.1.-.-</ecNumber>
    </recommendedName>
</protein>